<organism>
    <name type="scientific">Shewanella baltica (strain OS155 / ATCC BAA-1091)</name>
    <dbReference type="NCBI Taxonomy" id="325240"/>
    <lineage>
        <taxon>Bacteria</taxon>
        <taxon>Pseudomonadati</taxon>
        <taxon>Pseudomonadota</taxon>
        <taxon>Gammaproteobacteria</taxon>
        <taxon>Alteromonadales</taxon>
        <taxon>Shewanellaceae</taxon>
        <taxon>Shewanella</taxon>
    </lineage>
</organism>
<sequence>MKLVIVSGRSGSGKSVALRVLEDLGYYCVDNLPLPLIGSLLEQLKGSNDLVAISVDVRNMPEQDKVLVKQLASLPPDTELTSFFLNSSDKILLKRYSETRRLHPLSKSQVSLQEAIKLEGKLLEPMSKLVDHYIDTSNLNIYDLSDQVRQILLGSVDKELVINFESFGFKHGMPTEADFMFDVRFLPNPHWELALRPLTGLDEPVAEFLNRQPLVNKFIWQIENLLETWLPHLERNNRSYLTVAIGCTGGQHRSVYVAEQLAKRFSNGKHKVYARHRELNNAKA</sequence>
<evidence type="ECO:0000255" key="1">
    <source>
        <dbReference type="HAMAP-Rule" id="MF_00636"/>
    </source>
</evidence>
<accession>A3D8T3</accession>
<comment type="function">
    <text evidence="1">Displays ATPase and GTPase activities.</text>
</comment>
<comment type="similarity">
    <text evidence="1">Belongs to the RapZ-like family.</text>
</comment>
<reference key="1">
    <citation type="submission" date="2007-02" db="EMBL/GenBank/DDBJ databases">
        <title>Complete sequence of chromosome of Shewanella baltica OS155.</title>
        <authorList>
            <consortium name="US DOE Joint Genome Institute"/>
            <person name="Copeland A."/>
            <person name="Lucas S."/>
            <person name="Lapidus A."/>
            <person name="Barry K."/>
            <person name="Detter J.C."/>
            <person name="Glavina del Rio T."/>
            <person name="Hammon N."/>
            <person name="Israni S."/>
            <person name="Dalin E."/>
            <person name="Tice H."/>
            <person name="Pitluck S."/>
            <person name="Sims D.R."/>
            <person name="Brettin T."/>
            <person name="Bruce D."/>
            <person name="Han C."/>
            <person name="Tapia R."/>
            <person name="Brainard J."/>
            <person name="Schmutz J."/>
            <person name="Larimer F."/>
            <person name="Land M."/>
            <person name="Hauser L."/>
            <person name="Kyrpides N."/>
            <person name="Mikhailova N."/>
            <person name="Brettar I."/>
            <person name="Klappenbach J."/>
            <person name="Konstantinidis K."/>
            <person name="Rodrigues J."/>
            <person name="Tiedje J."/>
            <person name="Richardson P."/>
        </authorList>
    </citation>
    <scope>NUCLEOTIDE SEQUENCE [LARGE SCALE GENOMIC DNA]</scope>
    <source>
        <strain>OS155 / ATCC BAA-1091</strain>
    </source>
</reference>
<gene>
    <name type="ordered locus">Sbal_3671</name>
</gene>
<dbReference type="EMBL" id="CP000563">
    <property type="protein sequence ID" value="ABN63146.1"/>
    <property type="molecule type" value="Genomic_DNA"/>
</dbReference>
<dbReference type="RefSeq" id="WP_011847823.1">
    <property type="nucleotide sequence ID" value="NC_009052.1"/>
</dbReference>
<dbReference type="SMR" id="A3D8T3"/>
<dbReference type="STRING" id="325240.Sbal_3671"/>
<dbReference type="KEGG" id="sbl:Sbal_3671"/>
<dbReference type="HOGENOM" id="CLU_059558_1_1_6"/>
<dbReference type="OrthoDB" id="9784461at2"/>
<dbReference type="Proteomes" id="UP000001557">
    <property type="component" value="Chromosome"/>
</dbReference>
<dbReference type="GO" id="GO:0005524">
    <property type="term" value="F:ATP binding"/>
    <property type="evidence" value="ECO:0007669"/>
    <property type="project" value="UniProtKB-UniRule"/>
</dbReference>
<dbReference type="GO" id="GO:0005525">
    <property type="term" value="F:GTP binding"/>
    <property type="evidence" value="ECO:0007669"/>
    <property type="project" value="UniProtKB-UniRule"/>
</dbReference>
<dbReference type="HAMAP" id="MF_00636">
    <property type="entry name" value="RapZ_like"/>
    <property type="match status" value="1"/>
</dbReference>
<dbReference type="InterPro" id="IPR027417">
    <property type="entry name" value="P-loop_NTPase"/>
</dbReference>
<dbReference type="InterPro" id="IPR005337">
    <property type="entry name" value="RapZ-like"/>
</dbReference>
<dbReference type="InterPro" id="IPR053930">
    <property type="entry name" value="RapZ-like_N"/>
</dbReference>
<dbReference type="InterPro" id="IPR053931">
    <property type="entry name" value="RapZ_C"/>
</dbReference>
<dbReference type="NCBIfam" id="NF003828">
    <property type="entry name" value="PRK05416.1"/>
    <property type="match status" value="1"/>
</dbReference>
<dbReference type="PANTHER" id="PTHR30448">
    <property type="entry name" value="RNASE ADAPTER PROTEIN RAPZ"/>
    <property type="match status" value="1"/>
</dbReference>
<dbReference type="PANTHER" id="PTHR30448:SF0">
    <property type="entry name" value="RNASE ADAPTER PROTEIN RAPZ"/>
    <property type="match status" value="1"/>
</dbReference>
<dbReference type="Pfam" id="PF22740">
    <property type="entry name" value="PapZ_C"/>
    <property type="match status" value="1"/>
</dbReference>
<dbReference type="Pfam" id="PF03668">
    <property type="entry name" value="RapZ-like_N"/>
    <property type="match status" value="1"/>
</dbReference>
<dbReference type="PIRSF" id="PIRSF005052">
    <property type="entry name" value="P-loopkin"/>
    <property type="match status" value="1"/>
</dbReference>
<dbReference type="SUPFAM" id="SSF52540">
    <property type="entry name" value="P-loop containing nucleoside triphosphate hydrolases"/>
    <property type="match status" value="1"/>
</dbReference>
<keyword id="KW-0067">ATP-binding</keyword>
<keyword id="KW-0342">GTP-binding</keyword>
<keyword id="KW-0547">Nucleotide-binding</keyword>
<keyword id="KW-1185">Reference proteome</keyword>
<protein>
    <recommendedName>
        <fullName evidence="1">Nucleotide-binding protein Sbal_3671</fullName>
    </recommendedName>
</protein>
<feature type="chain" id="PRO_1000056852" description="Nucleotide-binding protein Sbal_3671">
    <location>
        <begin position="1"/>
        <end position="284"/>
    </location>
</feature>
<feature type="binding site" evidence="1">
    <location>
        <begin position="8"/>
        <end position="15"/>
    </location>
    <ligand>
        <name>ATP</name>
        <dbReference type="ChEBI" id="CHEBI:30616"/>
    </ligand>
</feature>
<feature type="binding site" evidence="1">
    <location>
        <begin position="56"/>
        <end position="59"/>
    </location>
    <ligand>
        <name>GTP</name>
        <dbReference type="ChEBI" id="CHEBI:37565"/>
    </ligand>
</feature>
<name>Y3671_SHEB5</name>
<proteinExistence type="inferred from homology"/>